<protein>
    <recommendedName>
        <fullName evidence="1">tRNA uridine(34) hydroxylase</fullName>
        <ecNumber evidence="1">1.14.-.-</ecNumber>
    </recommendedName>
    <alternativeName>
        <fullName evidence="1">tRNA hydroxylation protein O</fullName>
    </alternativeName>
</protein>
<name>TRHO_XANOM</name>
<proteinExistence type="inferred from homology"/>
<feature type="chain" id="PRO_0000242957" description="tRNA uridine(34) hydroxylase">
    <location>
        <begin position="1"/>
        <end position="253"/>
    </location>
</feature>
<feature type="domain" description="Rhodanese" evidence="1">
    <location>
        <begin position="127"/>
        <end position="221"/>
    </location>
</feature>
<feature type="active site" description="Cysteine persulfide intermediate" evidence="1">
    <location>
        <position position="181"/>
    </location>
</feature>
<reference key="1">
    <citation type="journal article" date="2005" name="Jpn. Agric. Res. Q.">
        <title>Genome sequence of Xanthomonas oryzae pv. oryzae suggests contribution of large numbers of effector genes and insertion sequences to its race diversity.</title>
        <authorList>
            <person name="Ochiai H."/>
            <person name="Inoue Y."/>
            <person name="Takeya M."/>
            <person name="Sasaki A."/>
            <person name="Kaku H."/>
        </authorList>
    </citation>
    <scope>NUCLEOTIDE SEQUENCE [LARGE SCALE GENOMIC DNA]</scope>
    <source>
        <strain>MAFF 311018</strain>
    </source>
</reference>
<comment type="function">
    <text evidence="1">Catalyzes oxygen-dependent 5-hydroxyuridine (ho5U) modification at position 34 in tRNAs.</text>
</comment>
<comment type="catalytic activity">
    <reaction evidence="1">
        <text>uridine(34) in tRNA + AH2 + O2 = 5-hydroxyuridine(34) in tRNA + A + H2O</text>
        <dbReference type="Rhea" id="RHEA:64224"/>
        <dbReference type="Rhea" id="RHEA-COMP:11727"/>
        <dbReference type="Rhea" id="RHEA-COMP:13381"/>
        <dbReference type="ChEBI" id="CHEBI:13193"/>
        <dbReference type="ChEBI" id="CHEBI:15377"/>
        <dbReference type="ChEBI" id="CHEBI:15379"/>
        <dbReference type="ChEBI" id="CHEBI:17499"/>
        <dbReference type="ChEBI" id="CHEBI:65315"/>
        <dbReference type="ChEBI" id="CHEBI:136877"/>
    </reaction>
</comment>
<comment type="similarity">
    <text evidence="1">Belongs to the TrhO family.</text>
</comment>
<evidence type="ECO:0000255" key="1">
    <source>
        <dbReference type="HAMAP-Rule" id="MF_00469"/>
    </source>
</evidence>
<accession>Q2P192</accession>
<keyword id="KW-0560">Oxidoreductase</keyword>
<keyword id="KW-0819">tRNA processing</keyword>
<organism>
    <name type="scientific">Xanthomonas oryzae pv. oryzae (strain MAFF 311018)</name>
    <dbReference type="NCBI Taxonomy" id="342109"/>
    <lineage>
        <taxon>Bacteria</taxon>
        <taxon>Pseudomonadati</taxon>
        <taxon>Pseudomonadota</taxon>
        <taxon>Gammaproteobacteria</taxon>
        <taxon>Lysobacterales</taxon>
        <taxon>Lysobacteraceae</taxon>
        <taxon>Xanthomonas</taxon>
    </lineage>
</organism>
<gene>
    <name evidence="1" type="primary">trhO</name>
    <name type="ordered locus">XOO2930</name>
</gene>
<sequence length="253" mass="27752">MITNTAAYQFVTIQHPQTLAASVLAQAEQQALKGSVLIAEEGINLFLAGDAEQIGAFYAWLQADARFARMRIKYSESAYQPFARLKVKIKPEIISFRRDDASPLQGRAPSVTPAVLREWLRNGQDDRGRPLVLLDTRNAQEVVYGTFQGALTLPIDTFTELPGALESHRAALADATVVSFCTGGIRCEKAALWMQADGMDNVLQLEGGILGYFEEVGGEGYDGRCFVFDERVALDPELKPLVDAERPAKTGKI</sequence>
<dbReference type="EC" id="1.14.-.-" evidence="1"/>
<dbReference type="EMBL" id="AP008229">
    <property type="protein sequence ID" value="BAE69685.1"/>
    <property type="molecule type" value="Genomic_DNA"/>
</dbReference>
<dbReference type="RefSeq" id="WP_011408973.1">
    <property type="nucleotide sequence ID" value="NC_007705.1"/>
</dbReference>
<dbReference type="SMR" id="Q2P192"/>
<dbReference type="KEGG" id="xom:XOO2930"/>
<dbReference type="HOGENOM" id="CLU_038878_0_1_6"/>
<dbReference type="GO" id="GO:0016705">
    <property type="term" value="F:oxidoreductase activity, acting on paired donors, with incorporation or reduction of molecular oxygen"/>
    <property type="evidence" value="ECO:0007669"/>
    <property type="project" value="UniProtKB-UniRule"/>
</dbReference>
<dbReference type="GO" id="GO:0006400">
    <property type="term" value="P:tRNA modification"/>
    <property type="evidence" value="ECO:0007669"/>
    <property type="project" value="UniProtKB-UniRule"/>
</dbReference>
<dbReference type="Gene3D" id="3.30.70.100">
    <property type="match status" value="1"/>
</dbReference>
<dbReference type="Gene3D" id="3.40.250.10">
    <property type="entry name" value="Rhodanese-like domain"/>
    <property type="match status" value="1"/>
</dbReference>
<dbReference type="HAMAP" id="MF_00469">
    <property type="entry name" value="TrhO"/>
    <property type="match status" value="1"/>
</dbReference>
<dbReference type="InterPro" id="IPR001763">
    <property type="entry name" value="Rhodanese-like_dom"/>
</dbReference>
<dbReference type="InterPro" id="IPR036873">
    <property type="entry name" value="Rhodanese-like_dom_sf"/>
</dbReference>
<dbReference type="InterPro" id="IPR020936">
    <property type="entry name" value="TrhO"/>
</dbReference>
<dbReference type="InterPro" id="IPR040503">
    <property type="entry name" value="TRHO_N"/>
</dbReference>
<dbReference type="NCBIfam" id="NF003703">
    <property type="entry name" value="PRK05320.1"/>
    <property type="match status" value="1"/>
</dbReference>
<dbReference type="PANTHER" id="PTHR43268:SF3">
    <property type="entry name" value="RHODANESE-LIKE DOMAIN-CONTAINING PROTEIN 7-RELATED"/>
    <property type="match status" value="1"/>
</dbReference>
<dbReference type="PANTHER" id="PTHR43268">
    <property type="entry name" value="THIOSULFATE SULFURTRANSFERASE/RHODANESE-LIKE DOMAIN-CONTAINING PROTEIN 2"/>
    <property type="match status" value="1"/>
</dbReference>
<dbReference type="Pfam" id="PF00581">
    <property type="entry name" value="Rhodanese"/>
    <property type="match status" value="1"/>
</dbReference>
<dbReference type="Pfam" id="PF17773">
    <property type="entry name" value="UPF0176_N"/>
    <property type="match status" value="1"/>
</dbReference>
<dbReference type="SMART" id="SM00450">
    <property type="entry name" value="RHOD"/>
    <property type="match status" value="1"/>
</dbReference>
<dbReference type="SUPFAM" id="SSF52821">
    <property type="entry name" value="Rhodanese/Cell cycle control phosphatase"/>
    <property type="match status" value="1"/>
</dbReference>
<dbReference type="PROSITE" id="PS50206">
    <property type="entry name" value="RHODANESE_3"/>
    <property type="match status" value="1"/>
</dbReference>